<protein>
    <recommendedName>
        <fullName evidence="1">Thiazole synthase</fullName>
        <ecNumber evidence="1">2.8.1.10</ecNumber>
    </recommendedName>
</protein>
<name>THIG_VIBVY</name>
<dbReference type="EC" id="2.8.1.10" evidence="1"/>
<dbReference type="EMBL" id="BA000037">
    <property type="protein sequence ID" value="BAC95967.1"/>
    <property type="status" value="ALT_INIT"/>
    <property type="molecule type" value="Genomic_DNA"/>
</dbReference>
<dbReference type="RefSeq" id="WP_011079006.1">
    <property type="nucleotide sequence ID" value="NC_005139.1"/>
</dbReference>
<dbReference type="SMR" id="Q7MGM7"/>
<dbReference type="STRING" id="672.VV93_v1c29220"/>
<dbReference type="KEGG" id="vvy:VV3203"/>
<dbReference type="PATRIC" id="fig|196600.6.peg.3170"/>
<dbReference type="eggNOG" id="COG2022">
    <property type="taxonomic scope" value="Bacteria"/>
</dbReference>
<dbReference type="HOGENOM" id="CLU_062233_1_0_6"/>
<dbReference type="UniPathway" id="UPA00060"/>
<dbReference type="Proteomes" id="UP000002675">
    <property type="component" value="Chromosome I"/>
</dbReference>
<dbReference type="GO" id="GO:0005737">
    <property type="term" value="C:cytoplasm"/>
    <property type="evidence" value="ECO:0007669"/>
    <property type="project" value="UniProtKB-SubCell"/>
</dbReference>
<dbReference type="GO" id="GO:1990107">
    <property type="term" value="F:thiazole synthase activity"/>
    <property type="evidence" value="ECO:0007669"/>
    <property type="project" value="UniProtKB-EC"/>
</dbReference>
<dbReference type="GO" id="GO:0009229">
    <property type="term" value="P:thiamine diphosphate biosynthetic process"/>
    <property type="evidence" value="ECO:0007669"/>
    <property type="project" value="UniProtKB-UniRule"/>
</dbReference>
<dbReference type="CDD" id="cd04728">
    <property type="entry name" value="ThiG"/>
    <property type="match status" value="1"/>
</dbReference>
<dbReference type="FunFam" id="3.20.20.70:FF:000049">
    <property type="entry name" value="Thiazole synthase"/>
    <property type="match status" value="1"/>
</dbReference>
<dbReference type="Gene3D" id="3.20.20.70">
    <property type="entry name" value="Aldolase class I"/>
    <property type="match status" value="1"/>
</dbReference>
<dbReference type="HAMAP" id="MF_00443">
    <property type="entry name" value="ThiG"/>
    <property type="match status" value="1"/>
</dbReference>
<dbReference type="InterPro" id="IPR013785">
    <property type="entry name" value="Aldolase_TIM"/>
</dbReference>
<dbReference type="InterPro" id="IPR033983">
    <property type="entry name" value="Thiazole_synthase_ThiG"/>
</dbReference>
<dbReference type="InterPro" id="IPR008867">
    <property type="entry name" value="ThiG"/>
</dbReference>
<dbReference type="PANTHER" id="PTHR34266">
    <property type="entry name" value="THIAZOLE SYNTHASE"/>
    <property type="match status" value="1"/>
</dbReference>
<dbReference type="PANTHER" id="PTHR34266:SF2">
    <property type="entry name" value="THIAZOLE SYNTHASE"/>
    <property type="match status" value="1"/>
</dbReference>
<dbReference type="Pfam" id="PF05690">
    <property type="entry name" value="ThiG"/>
    <property type="match status" value="1"/>
</dbReference>
<dbReference type="SUPFAM" id="SSF110399">
    <property type="entry name" value="ThiG-like"/>
    <property type="match status" value="1"/>
</dbReference>
<keyword id="KW-0963">Cytoplasm</keyword>
<keyword id="KW-0704">Schiff base</keyword>
<keyword id="KW-0784">Thiamine biosynthesis</keyword>
<keyword id="KW-0808">Transferase</keyword>
<sequence length="257" mass="27091">MLKIADKQFHSRLFTGTGKFANSQLMSQAIEQSGSQLATMALKRVDIHNQQDDILSPLLSAGVNLLPNTSGAKNAKDAIFAAHLAREALGTNWLKLEIHPDPKYLMPDPIETLAAAEQLVKDGFVVLPYCHADPVLCKRLEEVGCAAVMPLGAPIGSNKGLVSQDFLQIIIDQAKVPVVVDAGIGAPSHAAYAMELGADAVLVNTAIAAARDPIAMARAFKLAVEAGRLAYESGLAGKVSHAVASSPLTSFLDECLS</sequence>
<accession>Q7MGM7</accession>
<reference key="1">
    <citation type="journal article" date="2003" name="Genome Res.">
        <title>Comparative genome analysis of Vibrio vulnificus, a marine pathogen.</title>
        <authorList>
            <person name="Chen C.-Y."/>
            <person name="Wu K.-M."/>
            <person name="Chang Y.-C."/>
            <person name="Chang C.-H."/>
            <person name="Tsai H.-C."/>
            <person name="Liao T.-L."/>
            <person name="Liu Y.-M."/>
            <person name="Chen H.-J."/>
            <person name="Shen A.B.-T."/>
            <person name="Li J.-C."/>
            <person name="Su T.-L."/>
            <person name="Shao C.-P."/>
            <person name="Lee C.-T."/>
            <person name="Hor L.-I."/>
            <person name="Tsai S.-F."/>
        </authorList>
    </citation>
    <scope>NUCLEOTIDE SEQUENCE [LARGE SCALE GENOMIC DNA]</scope>
    <source>
        <strain>YJ016</strain>
    </source>
</reference>
<gene>
    <name evidence="1" type="primary">thiG</name>
    <name type="ordered locus">VV3203</name>
</gene>
<organism>
    <name type="scientific">Vibrio vulnificus (strain YJ016)</name>
    <dbReference type="NCBI Taxonomy" id="196600"/>
    <lineage>
        <taxon>Bacteria</taxon>
        <taxon>Pseudomonadati</taxon>
        <taxon>Pseudomonadota</taxon>
        <taxon>Gammaproteobacteria</taxon>
        <taxon>Vibrionales</taxon>
        <taxon>Vibrionaceae</taxon>
        <taxon>Vibrio</taxon>
    </lineage>
</organism>
<feature type="chain" id="PRO_0000162874" description="Thiazole synthase">
    <location>
        <begin position="1"/>
        <end position="257"/>
    </location>
</feature>
<feature type="active site" description="Schiff-base intermediate with DXP" evidence="1">
    <location>
        <position position="95"/>
    </location>
</feature>
<feature type="binding site" evidence="1">
    <location>
        <position position="156"/>
    </location>
    <ligand>
        <name>1-deoxy-D-xylulose 5-phosphate</name>
        <dbReference type="ChEBI" id="CHEBI:57792"/>
    </ligand>
</feature>
<feature type="binding site" evidence="1">
    <location>
        <begin position="182"/>
        <end position="183"/>
    </location>
    <ligand>
        <name>1-deoxy-D-xylulose 5-phosphate</name>
        <dbReference type="ChEBI" id="CHEBI:57792"/>
    </ligand>
</feature>
<feature type="binding site" evidence="1">
    <location>
        <begin position="204"/>
        <end position="205"/>
    </location>
    <ligand>
        <name>1-deoxy-D-xylulose 5-phosphate</name>
        <dbReference type="ChEBI" id="CHEBI:57792"/>
    </ligand>
</feature>
<proteinExistence type="inferred from homology"/>
<comment type="function">
    <text evidence="1">Catalyzes the rearrangement of 1-deoxy-D-xylulose 5-phosphate (DXP) to produce the thiazole phosphate moiety of thiamine. Sulfur is provided by the thiocarboxylate moiety of the carrier protein ThiS. In vitro, sulfur can be provided by H(2)S.</text>
</comment>
<comment type="catalytic activity">
    <reaction evidence="1">
        <text>[ThiS sulfur-carrier protein]-C-terminal-Gly-aminoethanethioate + 2-iminoacetate + 1-deoxy-D-xylulose 5-phosphate = [ThiS sulfur-carrier protein]-C-terminal Gly-Gly + 2-[(2R,5Z)-2-carboxy-4-methylthiazol-5(2H)-ylidene]ethyl phosphate + 2 H2O + H(+)</text>
        <dbReference type="Rhea" id="RHEA:26297"/>
        <dbReference type="Rhea" id="RHEA-COMP:12909"/>
        <dbReference type="Rhea" id="RHEA-COMP:19908"/>
        <dbReference type="ChEBI" id="CHEBI:15377"/>
        <dbReference type="ChEBI" id="CHEBI:15378"/>
        <dbReference type="ChEBI" id="CHEBI:57792"/>
        <dbReference type="ChEBI" id="CHEBI:62899"/>
        <dbReference type="ChEBI" id="CHEBI:77846"/>
        <dbReference type="ChEBI" id="CHEBI:90778"/>
        <dbReference type="ChEBI" id="CHEBI:232372"/>
        <dbReference type="EC" id="2.8.1.10"/>
    </reaction>
</comment>
<comment type="pathway">
    <text evidence="1">Cofactor biosynthesis; thiamine diphosphate biosynthesis.</text>
</comment>
<comment type="subunit">
    <text evidence="1">Homotetramer. Forms heterodimers with either ThiH or ThiS.</text>
</comment>
<comment type="subcellular location">
    <subcellularLocation>
        <location evidence="1">Cytoplasm</location>
    </subcellularLocation>
</comment>
<comment type="similarity">
    <text evidence="1">Belongs to the ThiG family.</text>
</comment>
<comment type="sequence caution" evidence="2">
    <conflict type="erroneous initiation">
        <sequence resource="EMBL-CDS" id="BAC95967"/>
    </conflict>
</comment>
<evidence type="ECO:0000255" key="1">
    <source>
        <dbReference type="HAMAP-Rule" id="MF_00443"/>
    </source>
</evidence>
<evidence type="ECO:0000305" key="2"/>